<protein>
    <recommendedName>
        <fullName>Cytokinin riboside 5'-monophosphate phosphoribohydrolase LOG5</fullName>
        <ecNumber>3.2.2.n1</ecNumber>
    </recommendedName>
    <alternativeName>
        <fullName>Protein LONELY GUY 5</fullName>
    </alternativeName>
</protein>
<accession>Q8LBB7</accession>
<accession>Q9T006</accession>
<reference key="1">
    <citation type="journal article" date="1999" name="Nature">
        <title>Sequence and analysis of chromosome 4 of the plant Arabidopsis thaliana.</title>
        <authorList>
            <person name="Mayer K.F.X."/>
            <person name="Schueller C."/>
            <person name="Wambutt R."/>
            <person name="Murphy G."/>
            <person name="Volckaert G."/>
            <person name="Pohl T."/>
            <person name="Duesterhoeft A."/>
            <person name="Stiekema W."/>
            <person name="Entian K.-D."/>
            <person name="Terryn N."/>
            <person name="Harris B."/>
            <person name="Ansorge W."/>
            <person name="Brandt P."/>
            <person name="Grivell L.A."/>
            <person name="Rieger M."/>
            <person name="Weichselgartner M."/>
            <person name="de Simone V."/>
            <person name="Obermaier B."/>
            <person name="Mache R."/>
            <person name="Mueller M."/>
            <person name="Kreis M."/>
            <person name="Delseny M."/>
            <person name="Puigdomenech P."/>
            <person name="Watson M."/>
            <person name="Schmidtheini T."/>
            <person name="Reichert B."/>
            <person name="Portetelle D."/>
            <person name="Perez-Alonso M."/>
            <person name="Boutry M."/>
            <person name="Bancroft I."/>
            <person name="Vos P."/>
            <person name="Hoheisel J."/>
            <person name="Zimmermann W."/>
            <person name="Wedler H."/>
            <person name="Ridley P."/>
            <person name="Langham S.-A."/>
            <person name="McCullagh B."/>
            <person name="Bilham L."/>
            <person name="Robben J."/>
            <person name="van der Schueren J."/>
            <person name="Grymonprez B."/>
            <person name="Chuang Y.-J."/>
            <person name="Vandenbussche F."/>
            <person name="Braeken M."/>
            <person name="Weltjens I."/>
            <person name="Voet M."/>
            <person name="Bastiaens I."/>
            <person name="Aert R."/>
            <person name="Defoor E."/>
            <person name="Weitzenegger T."/>
            <person name="Bothe G."/>
            <person name="Ramsperger U."/>
            <person name="Hilbert H."/>
            <person name="Braun M."/>
            <person name="Holzer E."/>
            <person name="Brandt A."/>
            <person name="Peters S."/>
            <person name="van Staveren M."/>
            <person name="Dirkse W."/>
            <person name="Mooijman P."/>
            <person name="Klein Lankhorst R."/>
            <person name="Rose M."/>
            <person name="Hauf J."/>
            <person name="Koetter P."/>
            <person name="Berneiser S."/>
            <person name="Hempel S."/>
            <person name="Feldpausch M."/>
            <person name="Lamberth S."/>
            <person name="Van den Daele H."/>
            <person name="De Keyser A."/>
            <person name="Buysshaert C."/>
            <person name="Gielen J."/>
            <person name="Villarroel R."/>
            <person name="De Clercq R."/>
            <person name="van Montagu M."/>
            <person name="Rogers J."/>
            <person name="Cronin A."/>
            <person name="Quail M.A."/>
            <person name="Bray-Allen S."/>
            <person name="Clark L."/>
            <person name="Doggett J."/>
            <person name="Hall S."/>
            <person name="Kay M."/>
            <person name="Lennard N."/>
            <person name="McLay K."/>
            <person name="Mayes R."/>
            <person name="Pettett A."/>
            <person name="Rajandream M.A."/>
            <person name="Lyne M."/>
            <person name="Benes V."/>
            <person name="Rechmann S."/>
            <person name="Borkova D."/>
            <person name="Bloecker H."/>
            <person name="Scharfe M."/>
            <person name="Grimm M."/>
            <person name="Loehnert T.-H."/>
            <person name="Dose S."/>
            <person name="de Haan M."/>
            <person name="Maarse A.C."/>
            <person name="Schaefer M."/>
            <person name="Mueller-Auer S."/>
            <person name="Gabel C."/>
            <person name="Fuchs M."/>
            <person name="Fartmann B."/>
            <person name="Granderath K."/>
            <person name="Dauner D."/>
            <person name="Herzl A."/>
            <person name="Neumann S."/>
            <person name="Argiriou A."/>
            <person name="Vitale D."/>
            <person name="Liguori R."/>
            <person name="Piravandi E."/>
            <person name="Massenet O."/>
            <person name="Quigley F."/>
            <person name="Clabauld G."/>
            <person name="Muendlein A."/>
            <person name="Felber R."/>
            <person name="Schnabl S."/>
            <person name="Hiller R."/>
            <person name="Schmidt W."/>
            <person name="Lecharny A."/>
            <person name="Aubourg S."/>
            <person name="Chefdor F."/>
            <person name="Cooke R."/>
            <person name="Berger C."/>
            <person name="Monfort A."/>
            <person name="Casacuberta E."/>
            <person name="Gibbons T."/>
            <person name="Weber N."/>
            <person name="Vandenbol M."/>
            <person name="Bargues M."/>
            <person name="Terol J."/>
            <person name="Torres A."/>
            <person name="Perez-Perez A."/>
            <person name="Purnelle B."/>
            <person name="Bent E."/>
            <person name="Johnson S."/>
            <person name="Tacon D."/>
            <person name="Jesse T."/>
            <person name="Heijnen L."/>
            <person name="Schwarz S."/>
            <person name="Scholler P."/>
            <person name="Heber S."/>
            <person name="Francs P."/>
            <person name="Bielke C."/>
            <person name="Frishman D."/>
            <person name="Haase D."/>
            <person name="Lemcke K."/>
            <person name="Mewes H.-W."/>
            <person name="Stocker S."/>
            <person name="Zaccaria P."/>
            <person name="Bevan M."/>
            <person name="Wilson R.K."/>
            <person name="de la Bastide M."/>
            <person name="Habermann K."/>
            <person name="Parnell L."/>
            <person name="Dedhia N."/>
            <person name="Gnoj L."/>
            <person name="Schutz K."/>
            <person name="Huang E."/>
            <person name="Spiegel L."/>
            <person name="Sekhon M."/>
            <person name="Murray J."/>
            <person name="Sheet P."/>
            <person name="Cordes M."/>
            <person name="Abu-Threideh J."/>
            <person name="Stoneking T."/>
            <person name="Kalicki J."/>
            <person name="Graves T."/>
            <person name="Harmon G."/>
            <person name="Edwards J."/>
            <person name="Latreille P."/>
            <person name="Courtney L."/>
            <person name="Cloud J."/>
            <person name="Abbott A."/>
            <person name="Scott K."/>
            <person name="Johnson D."/>
            <person name="Minx P."/>
            <person name="Bentley D."/>
            <person name="Fulton B."/>
            <person name="Miller N."/>
            <person name="Greco T."/>
            <person name="Kemp K."/>
            <person name="Kramer J."/>
            <person name="Fulton L."/>
            <person name="Mardis E."/>
            <person name="Dante M."/>
            <person name="Pepin K."/>
            <person name="Hillier L.W."/>
            <person name="Nelson J."/>
            <person name="Spieth J."/>
            <person name="Ryan E."/>
            <person name="Andrews S."/>
            <person name="Geisel C."/>
            <person name="Layman D."/>
            <person name="Du H."/>
            <person name="Ali J."/>
            <person name="Berghoff A."/>
            <person name="Jones K."/>
            <person name="Drone K."/>
            <person name="Cotton M."/>
            <person name="Joshu C."/>
            <person name="Antonoiu B."/>
            <person name="Zidanic M."/>
            <person name="Strong C."/>
            <person name="Sun H."/>
            <person name="Lamar B."/>
            <person name="Yordan C."/>
            <person name="Ma P."/>
            <person name="Zhong J."/>
            <person name="Preston R."/>
            <person name="Vil D."/>
            <person name="Shekher M."/>
            <person name="Matero A."/>
            <person name="Shah R."/>
            <person name="Swaby I.K."/>
            <person name="O'Shaughnessy A."/>
            <person name="Rodriguez M."/>
            <person name="Hoffman J."/>
            <person name="Till S."/>
            <person name="Granat S."/>
            <person name="Shohdy N."/>
            <person name="Hasegawa A."/>
            <person name="Hameed A."/>
            <person name="Lodhi M."/>
            <person name="Johnson A."/>
            <person name="Chen E."/>
            <person name="Marra M.A."/>
            <person name="Martienssen R."/>
            <person name="McCombie W.R."/>
        </authorList>
    </citation>
    <scope>NUCLEOTIDE SEQUENCE [LARGE SCALE GENOMIC DNA]</scope>
    <source>
        <strain>cv. Columbia</strain>
    </source>
</reference>
<reference key="2">
    <citation type="journal article" date="2017" name="Plant J.">
        <title>Araport11: a complete reannotation of the Arabidopsis thaliana reference genome.</title>
        <authorList>
            <person name="Cheng C.Y."/>
            <person name="Krishnakumar V."/>
            <person name="Chan A.P."/>
            <person name="Thibaud-Nissen F."/>
            <person name="Schobel S."/>
            <person name="Town C.D."/>
        </authorList>
    </citation>
    <scope>GENOME REANNOTATION</scope>
    <source>
        <strain>cv. Columbia</strain>
    </source>
</reference>
<reference key="3">
    <citation type="submission" date="2002-03" db="EMBL/GenBank/DDBJ databases">
        <title>Full-length cDNA from Arabidopsis thaliana.</title>
        <authorList>
            <person name="Brover V.V."/>
            <person name="Troukhan M.E."/>
            <person name="Alexandrov N.A."/>
            <person name="Lu Y.-P."/>
            <person name="Flavell R.B."/>
            <person name="Feldmann K.A."/>
        </authorList>
    </citation>
    <scope>NUCLEOTIDE SEQUENCE [LARGE SCALE MRNA]</scope>
</reference>
<reference key="4">
    <citation type="submission" date="2006-08" db="EMBL/GenBank/DDBJ databases">
        <title>Arabidopsis ORF Clones.</title>
        <authorList>
            <person name="Quinitio C."/>
            <person name="Chen H."/>
            <person name="Kim C.J."/>
            <person name="Shinn P."/>
            <person name="Ecker J.R."/>
        </authorList>
    </citation>
    <scope>NUCLEOTIDE SEQUENCE [LARGE SCALE MRNA]</scope>
    <source>
        <strain>cv. Columbia</strain>
    </source>
</reference>
<reference key="5">
    <citation type="journal article" date="2007" name="Nature">
        <title>Direct control of shoot meristem activity by a cytokinin-activating enzyme.</title>
        <authorList>
            <person name="Kurakawa T."/>
            <person name="Ueda N."/>
            <person name="Maekawa M."/>
            <person name="Kobayashi K."/>
            <person name="Kojima M."/>
            <person name="Nagato Y."/>
            <person name="Sakakibara H."/>
            <person name="Kyozuka J."/>
        </authorList>
    </citation>
    <scope>IDENTIFICATION</scope>
</reference>
<reference key="6">
    <citation type="journal article" date="2009" name="Plant Cell">
        <title>Functional analyses of LONELY GUY cytokinin-activating enzymes reveal the importance of the direct activation pathway in Arabidopsis.</title>
        <authorList>
            <person name="Kuroha T."/>
            <person name="Tokunaga H."/>
            <person name="Kojima M."/>
            <person name="Ueda N."/>
            <person name="Ishida T."/>
            <person name="Nagawa S."/>
            <person name="Fukuda H."/>
            <person name="Sugimoto K."/>
            <person name="Sakakibara H."/>
        </authorList>
    </citation>
    <scope>FUNCTION</scope>
    <scope>CATALYTIC ACTIVITY</scope>
    <scope>BIOPHYSICOCHEMICAL PROPERTIES</scope>
    <scope>DISRUPTION PHENOTYPE</scope>
    <scope>TISSUE SPECIFICITY</scope>
    <scope>SUBCELLULAR LOCATION</scope>
    <scope>GENE FAMILY</scope>
    <scope>NOMENCLATURE</scope>
</reference>
<feature type="chain" id="PRO_0000395048" description="Cytokinin riboside 5'-monophosphate phosphoribohydrolase LOG5">
    <location>
        <begin position="1"/>
        <end position="228"/>
    </location>
</feature>
<feature type="binding site" evidence="1">
    <location>
        <position position="79"/>
    </location>
    <ligand>
        <name>substrate</name>
    </ligand>
</feature>
<feature type="binding site" evidence="1">
    <location>
        <begin position="97"/>
        <end position="98"/>
    </location>
    <ligand>
        <name>substrate</name>
    </ligand>
</feature>
<feature type="binding site" evidence="1">
    <location>
        <begin position="114"/>
        <end position="120"/>
    </location>
    <ligand>
        <name>substrate</name>
    </ligand>
</feature>
<name>LOG5_ARATH</name>
<keyword id="KW-0203">Cytokinin biosynthesis</keyword>
<keyword id="KW-0963">Cytoplasm</keyword>
<keyword id="KW-0378">Hydrolase</keyword>
<keyword id="KW-0539">Nucleus</keyword>
<keyword id="KW-1185">Reference proteome</keyword>
<proteinExistence type="evidence at protein level"/>
<organism>
    <name type="scientific">Arabidopsis thaliana</name>
    <name type="common">Mouse-ear cress</name>
    <dbReference type="NCBI Taxonomy" id="3702"/>
    <lineage>
        <taxon>Eukaryota</taxon>
        <taxon>Viridiplantae</taxon>
        <taxon>Streptophyta</taxon>
        <taxon>Embryophyta</taxon>
        <taxon>Tracheophyta</taxon>
        <taxon>Spermatophyta</taxon>
        <taxon>Magnoliopsida</taxon>
        <taxon>eudicotyledons</taxon>
        <taxon>Gunneridae</taxon>
        <taxon>Pentapetalae</taxon>
        <taxon>rosids</taxon>
        <taxon>malvids</taxon>
        <taxon>Brassicales</taxon>
        <taxon>Brassicaceae</taxon>
        <taxon>Camelineae</taxon>
        <taxon>Arabidopsis</taxon>
    </lineage>
</organism>
<gene>
    <name type="primary">LOG5</name>
    <name type="ordered locus">At4g35190</name>
    <name type="ORF">T12J5.60</name>
</gene>
<evidence type="ECO:0000250" key="1">
    <source>
        <dbReference type="UniProtKB" id="B2HS63"/>
    </source>
</evidence>
<evidence type="ECO:0000269" key="2">
    <source>
    </source>
</evidence>
<evidence type="ECO:0000305" key="3"/>
<dbReference type="EC" id="3.2.2.n1"/>
<dbReference type="EMBL" id="AL035522">
    <property type="protein sequence ID" value="CAB36726.1"/>
    <property type="status" value="ALT_SEQ"/>
    <property type="molecule type" value="Genomic_DNA"/>
</dbReference>
<dbReference type="EMBL" id="AL161587">
    <property type="protein sequence ID" value="CAB80236.1"/>
    <property type="status" value="ALT_SEQ"/>
    <property type="molecule type" value="Genomic_DNA"/>
</dbReference>
<dbReference type="EMBL" id="CP002687">
    <property type="protein sequence ID" value="AEE86478.1"/>
    <property type="molecule type" value="Genomic_DNA"/>
</dbReference>
<dbReference type="EMBL" id="AY087308">
    <property type="protein sequence ID" value="AAM64859.1"/>
    <property type="molecule type" value="mRNA"/>
</dbReference>
<dbReference type="EMBL" id="BT026408">
    <property type="protein sequence ID" value="ABH04515.1"/>
    <property type="molecule type" value="mRNA"/>
</dbReference>
<dbReference type="PIR" id="T04966">
    <property type="entry name" value="T04966"/>
</dbReference>
<dbReference type="RefSeq" id="NP_567978.1">
    <property type="nucleotide sequence ID" value="NM_119685.3"/>
</dbReference>
<dbReference type="SMR" id="Q8LBB7"/>
<dbReference type="STRING" id="3702.Q8LBB7"/>
<dbReference type="PaxDb" id="3702-AT4G35190.1"/>
<dbReference type="ProteomicsDB" id="238661"/>
<dbReference type="EnsemblPlants" id="AT4G35190.1">
    <property type="protein sequence ID" value="AT4G35190.1"/>
    <property type="gene ID" value="AT4G35190"/>
</dbReference>
<dbReference type="GeneID" id="829672"/>
<dbReference type="Gramene" id="AT4G35190.1">
    <property type="protein sequence ID" value="AT4G35190.1"/>
    <property type="gene ID" value="AT4G35190"/>
</dbReference>
<dbReference type="KEGG" id="ath:AT4G35190"/>
<dbReference type="Araport" id="AT4G35190"/>
<dbReference type="TAIR" id="AT4G35190">
    <property type="gene designation" value="LOG5"/>
</dbReference>
<dbReference type="eggNOG" id="ENOG502QSR9">
    <property type="taxonomic scope" value="Eukaryota"/>
</dbReference>
<dbReference type="HOGENOM" id="CLU_058336_2_0_1"/>
<dbReference type="InParanoid" id="Q8LBB7"/>
<dbReference type="OrthoDB" id="414463at2759"/>
<dbReference type="PhylomeDB" id="Q8LBB7"/>
<dbReference type="PRO" id="PR:Q8LBB7"/>
<dbReference type="Proteomes" id="UP000006548">
    <property type="component" value="Chromosome 4"/>
</dbReference>
<dbReference type="ExpressionAtlas" id="Q8LBB7">
    <property type="expression patterns" value="baseline and differential"/>
</dbReference>
<dbReference type="GO" id="GO:0005829">
    <property type="term" value="C:cytosol"/>
    <property type="evidence" value="ECO:0000314"/>
    <property type="project" value="TAIR"/>
</dbReference>
<dbReference type="GO" id="GO:0005634">
    <property type="term" value="C:nucleus"/>
    <property type="evidence" value="ECO:0000314"/>
    <property type="project" value="TAIR"/>
</dbReference>
<dbReference type="GO" id="GO:0102682">
    <property type="term" value="F:cytokinin riboside 5'-monophosphate phosphoribohydrolase activity"/>
    <property type="evidence" value="ECO:0007669"/>
    <property type="project" value="RHEA"/>
</dbReference>
<dbReference type="GO" id="GO:0009691">
    <property type="term" value="P:cytokinin biosynthetic process"/>
    <property type="evidence" value="ECO:0007669"/>
    <property type="project" value="UniProtKB-KW"/>
</dbReference>
<dbReference type="FunFam" id="3.40.50.450:FF:000005">
    <property type="entry name" value="CASP-like protein"/>
    <property type="match status" value="1"/>
</dbReference>
<dbReference type="Gene3D" id="3.40.50.450">
    <property type="match status" value="1"/>
</dbReference>
<dbReference type="InterPro" id="IPR005269">
    <property type="entry name" value="LOG"/>
</dbReference>
<dbReference type="InterPro" id="IPR031100">
    <property type="entry name" value="LOG_fam"/>
</dbReference>
<dbReference type="NCBIfam" id="TIGR00730">
    <property type="entry name" value="Rossman fold protein, TIGR00730 family"/>
    <property type="match status" value="1"/>
</dbReference>
<dbReference type="PANTHER" id="PTHR31223:SF14">
    <property type="entry name" value="CYTOKININ RIBOSIDE 5'-MONOPHOSPHATE PHOSPHORIBOHYDROLASE LOG5"/>
    <property type="match status" value="1"/>
</dbReference>
<dbReference type="PANTHER" id="PTHR31223">
    <property type="entry name" value="LOG FAMILY PROTEIN YJL055W"/>
    <property type="match status" value="1"/>
</dbReference>
<dbReference type="Pfam" id="PF03641">
    <property type="entry name" value="Lysine_decarbox"/>
    <property type="match status" value="1"/>
</dbReference>
<dbReference type="SUPFAM" id="SSF102405">
    <property type="entry name" value="MCP/YpsA-like"/>
    <property type="match status" value="1"/>
</dbReference>
<sequence>MEIVKSRFKRVCVFCGSSSGKRECYSDAATDLAQELVTRRLNLVYGGGSIGLMGLVSQAVHEAGGHVLGIIPRTLMDKEITGETYGEVIAVADMHERKAEMARHSDCFIALPGGYGTLEELLEVIAWAQLGIHDKPVGLLNVDGYYNYLLTFIDKAVDDGFIKPSQRHIFVSAPNAKELVQKLEAYKPVNDGVIAKSRWEVEKKVQQPQQQQQVVFCSNTSMQTEIAL</sequence>
<comment type="function">
    <text evidence="2">Cytokinin-activating enzyme working in the direct activation pathway. Phosphoribohydrolase that converts inactive cytokinin nucleotides to the biologically active free-base forms.</text>
</comment>
<comment type="catalytic activity">
    <reaction evidence="2">
        <text>N(6)-(dimethylallyl)adenosine 5'-phosphate + H2O = N(6)-dimethylallyladenine + D-ribose 5-phosphate</text>
        <dbReference type="Rhea" id="RHEA:48560"/>
        <dbReference type="ChEBI" id="CHEBI:15377"/>
        <dbReference type="ChEBI" id="CHEBI:17660"/>
        <dbReference type="ChEBI" id="CHEBI:57526"/>
        <dbReference type="ChEBI" id="CHEBI:78346"/>
        <dbReference type="EC" id="3.2.2.n1"/>
    </reaction>
</comment>
<comment type="catalytic activity">
    <reaction evidence="2">
        <text>9-ribosyl-trans-zeatin 5'-phosphate + H2O = trans-zeatin + D-ribose 5-phosphate</text>
        <dbReference type="Rhea" id="RHEA:48564"/>
        <dbReference type="ChEBI" id="CHEBI:15377"/>
        <dbReference type="ChEBI" id="CHEBI:16522"/>
        <dbReference type="ChEBI" id="CHEBI:78346"/>
        <dbReference type="ChEBI" id="CHEBI:87947"/>
        <dbReference type="EC" id="3.2.2.n1"/>
    </reaction>
</comment>
<comment type="biophysicochemical properties">
    <kinetics>
        <KM evidence="2">11 uM for N(6)-(Delta(2)-isopentenyl)-adenosine 5'-phosphate</KM>
        <Vmax evidence="2">0.73 umol/min/mg enzyme with N(6)-(Delta(2)-isopentenyl)-adenosine 5'-phosphate as substrate</Vmax>
        <text>can also use benzyladenine riboside 5'-monophosphste as substrate.</text>
    </kinetics>
    <phDependence>
        <text evidence="2">Optimum pH is 5.4.</text>
    </phDependence>
</comment>
<comment type="subcellular location">
    <subcellularLocation>
        <location evidence="2">Cytoplasm</location>
    </subcellularLocation>
    <subcellularLocation>
        <location evidence="2">Nucleus</location>
    </subcellularLocation>
</comment>
<comment type="tissue specificity">
    <text evidence="2">Expressed in roots and shoots. Detected in vascular tissues of roots, cotyledons, and leaves, axillary buds, immature and mature flowers, fruit abscission zones and ovules.</text>
</comment>
<comment type="disruption phenotype">
    <text evidence="2">No visible phenotype under normal growth conditions; due to the redundancy with other LOG proteins.</text>
</comment>
<comment type="similarity">
    <text evidence="3">Belongs to the LOG family.</text>
</comment>
<comment type="sequence caution" evidence="3">
    <conflict type="erroneous gene model prediction">
        <sequence resource="EMBL-CDS" id="CAB36726"/>
    </conflict>
</comment>
<comment type="sequence caution" evidence="3">
    <conflict type="erroneous gene model prediction">
        <sequence resource="EMBL-CDS" id="CAB80236"/>
    </conflict>
</comment>